<comment type="function">
    <text evidence="4">Papain-like protease p48 is a cysteine protease of the peptidase family C8.</text>
</comment>
<comment type="catalytic activity">
    <reaction>
        <text>RNA(n) + a ribonucleoside 5'-triphosphate = RNA(n+1) + diphosphate</text>
        <dbReference type="Rhea" id="RHEA:21248"/>
        <dbReference type="Rhea" id="RHEA-COMP:14527"/>
        <dbReference type="Rhea" id="RHEA-COMP:17342"/>
        <dbReference type="ChEBI" id="CHEBI:33019"/>
        <dbReference type="ChEBI" id="CHEBI:61557"/>
        <dbReference type="ChEBI" id="CHEBI:140395"/>
        <dbReference type="EC" id="2.7.7.48"/>
    </reaction>
</comment>
<comment type="catalytic activity">
    <reaction>
        <text>ATP + H2O = ADP + phosphate + H(+)</text>
        <dbReference type="Rhea" id="RHEA:13065"/>
        <dbReference type="ChEBI" id="CHEBI:15377"/>
        <dbReference type="ChEBI" id="CHEBI:15378"/>
        <dbReference type="ChEBI" id="CHEBI:30616"/>
        <dbReference type="ChEBI" id="CHEBI:43474"/>
        <dbReference type="ChEBI" id="CHEBI:456216"/>
        <dbReference type="EC" id="3.6.4.13"/>
    </reaction>
</comment>
<comment type="subcellular location">
    <molecule>Putative RNA-directed RNA polymerase/helicase</molecule>
    <subcellularLocation>
        <location evidence="6">Host membrane</location>
        <topology evidence="6">Multi-pass membrane protein</topology>
    </subcellularLocation>
</comment>
<comment type="PTM">
    <text evidence="1">Papain-like protease p48 is autocatalytically processed. The putative RNA-directed RNA polymerase/helicase is probably further processed (By similarity).</text>
</comment>
<comment type="miscellaneous">
    <text>Hypoviruses induce hypovirulence in their fungal host Cryphonectria parasitica. The consequence is attenuation of the related fungal disease, chestnut blight, that causes cankers that enlarge and kill branches and trunks. The virus-like genetic elements consist of cytoplasmically replicating double-stranded RNA.</text>
</comment>
<comment type="miscellaneous">
    <text>CHV-1 strain Euro7 is a mild hypovirulent strain.</text>
</comment>
<comment type="similarity">
    <text evidence="6">In the C-terminal section; belongs to the DEAD box helicase family.</text>
</comment>
<organismHost>
    <name type="scientific">Cryphonectria parasitica</name>
    <name type="common">Chestnut blight fungus</name>
    <name type="synonym">Endothia parasitica</name>
    <dbReference type="NCBI Taxonomy" id="5116"/>
</organismHost>
<feature type="chain" id="PRO_0000038883" description="Papain-like protease p48" evidence="1">
    <location>
        <begin position="1"/>
        <end position="418"/>
    </location>
</feature>
<feature type="chain" id="PRO_0000038884" description="Putative RNA-directed RNA polymerase/helicase" evidence="2">
    <location>
        <begin position="419"/>
        <end position="3164"/>
    </location>
</feature>
<feature type="transmembrane region" description="Helical" evidence="2">
    <location>
        <begin position="684"/>
        <end position="704"/>
    </location>
</feature>
<feature type="transmembrane region" description="Helical" evidence="2">
    <location>
        <begin position="791"/>
        <end position="811"/>
    </location>
</feature>
<feature type="transmembrane region" description="Helical" evidence="2">
    <location>
        <begin position="823"/>
        <end position="843"/>
    </location>
</feature>
<feature type="transmembrane region" description="Helical" evidence="2">
    <location>
        <begin position="1166"/>
        <end position="1186"/>
    </location>
</feature>
<feature type="transmembrane region" description="Helical" evidence="2">
    <location>
        <begin position="1215"/>
        <end position="1235"/>
    </location>
</feature>
<feature type="transmembrane region" description="Helical" evidence="2">
    <location>
        <begin position="1356"/>
        <end position="1376"/>
    </location>
</feature>
<feature type="transmembrane region" description="Helical" evidence="2">
    <location>
        <begin position="2494"/>
        <end position="2514"/>
    </location>
</feature>
<feature type="transmembrane region" description="Helical" evidence="2">
    <location>
        <begin position="2516"/>
        <end position="2536"/>
    </location>
</feature>
<feature type="transmembrane region" description="Helical" evidence="2">
    <location>
        <begin position="2589"/>
        <end position="2609"/>
    </location>
</feature>
<feature type="domain" description="Peptidase C8" evidence="4">
    <location>
        <begin position="271"/>
        <end position="418"/>
    </location>
</feature>
<feature type="domain" description="Helicase ATP-binding" evidence="3">
    <location>
        <begin position="2650"/>
        <end position="2795"/>
    </location>
</feature>
<feature type="region of interest" description="Disordered" evidence="5">
    <location>
        <begin position="1419"/>
        <end position="1445"/>
    </location>
</feature>
<feature type="region of interest" description="RNA-directed RNA polymerase" evidence="2">
    <location>
        <begin position="1792"/>
        <end position="2207"/>
    </location>
</feature>
<feature type="short sequence motif" description="DEFH box">
    <location>
        <begin position="2750"/>
        <end position="2753"/>
    </location>
</feature>
<feature type="active site" description="For papain-like protease p48 activity" evidence="4">
    <location>
        <position position="341"/>
    </location>
</feature>
<feature type="active site" description="For papain-like protease p48 activity" evidence="4">
    <location>
        <position position="388"/>
    </location>
</feature>
<feature type="binding site" evidence="3">
    <location>
        <begin position="2663"/>
        <end position="2670"/>
    </location>
    <ligand>
        <name>ATP</name>
        <dbReference type="ChEBI" id="CHEBI:30616"/>
    </ligand>
</feature>
<feature type="site" description="Cleavage; by papain-like protease p48" evidence="4">
    <location>
        <begin position="418"/>
        <end position="419"/>
    </location>
</feature>
<dbReference type="EC" id="3.4.22.-" evidence="4"/>
<dbReference type="EC" id="2.7.7.48"/>
<dbReference type="EC" id="3.6.4.13"/>
<dbReference type="EMBL" id="AF082191">
    <property type="protein sequence ID" value="AAD13750.1"/>
    <property type="molecule type" value="Genomic_RNA"/>
</dbReference>
<dbReference type="MEROPS" id="C08.001"/>
<dbReference type="Proteomes" id="UP000008451">
    <property type="component" value="Genome"/>
</dbReference>
<dbReference type="GO" id="GO:0033644">
    <property type="term" value="C:host cell membrane"/>
    <property type="evidence" value="ECO:0007669"/>
    <property type="project" value="UniProtKB-SubCell"/>
</dbReference>
<dbReference type="GO" id="GO:0016020">
    <property type="term" value="C:membrane"/>
    <property type="evidence" value="ECO:0007669"/>
    <property type="project" value="UniProtKB-KW"/>
</dbReference>
<dbReference type="GO" id="GO:0005524">
    <property type="term" value="F:ATP binding"/>
    <property type="evidence" value="ECO:0007669"/>
    <property type="project" value="UniProtKB-KW"/>
</dbReference>
<dbReference type="GO" id="GO:0016887">
    <property type="term" value="F:ATP hydrolysis activity"/>
    <property type="evidence" value="ECO:0007669"/>
    <property type="project" value="RHEA"/>
</dbReference>
<dbReference type="GO" id="GO:0008234">
    <property type="term" value="F:cysteine-type peptidase activity"/>
    <property type="evidence" value="ECO:0007669"/>
    <property type="project" value="UniProtKB-KW"/>
</dbReference>
<dbReference type="GO" id="GO:0003724">
    <property type="term" value="F:RNA helicase activity"/>
    <property type="evidence" value="ECO:0007669"/>
    <property type="project" value="UniProtKB-EC"/>
</dbReference>
<dbReference type="GO" id="GO:0003968">
    <property type="term" value="F:RNA-directed RNA polymerase activity"/>
    <property type="evidence" value="ECO:0007669"/>
    <property type="project" value="UniProtKB-KW"/>
</dbReference>
<dbReference type="GO" id="GO:0006508">
    <property type="term" value="P:proteolysis"/>
    <property type="evidence" value="ECO:0007669"/>
    <property type="project" value="UniProtKB-KW"/>
</dbReference>
<dbReference type="Gene3D" id="3.40.50.300">
    <property type="entry name" value="P-loop containing nucleotide triphosphate hydrolases"/>
    <property type="match status" value="1"/>
</dbReference>
<dbReference type="InterPro" id="IPR043502">
    <property type="entry name" value="DNA/RNA_pol_sf"/>
</dbReference>
<dbReference type="InterPro" id="IPR021912">
    <property type="entry name" value="DUF3525"/>
</dbReference>
<dbReference type="InterPro" id="IPR014001">
    <property type="entry name" value="Helicase_ATP-bd"/>
</dbReference>
<dbReference type="InterPro" id="IPR027417">
    <property type="entry name" value="P-loop_NTPase"/>
</dbReference>
<dbReference type="InterPro" id="IPR005315">
    <property type="entry name" value="Peptidase_C8"/>
</dbReference>
<dbReference type="Pfam" id="PF12039">
    <property type="entry name" value="DUF3525"/>
    <property type="match status" value="2"/>
</dbReference>
<dbReference type="Pfam" id="PF03569">
    <property type="entry name" value="Peptidase_C8"/>
    <property type="match status" value="1"/>
</dbReference>
<dbReference type="SMART" id="SM00487">
    <property type="entry name" value="DEXDc"/>
    <property type="match status" value="1"/>
</dbReference>
<dbReference type="SUPFAM" id="SSF56672">
    <property type="entry name" value="DNA/RNA polymerases"/>
    <property type="match status" value="1"/>
</dbReference>
<dbReference type="SUPFAM" id="SSF52540">
    <property type="entry name" value="P-loop containing nucleoside triphosphate hydrolases"/>
    <property type="match status" value="1"/>
</dbReference>
<dbReference type="PROSITE" id="PS51875">
    <property type="entry name" value="HAV_P48_PRO"/>
    <property type="match status" value="1"/>
</dbReference>
<dbReference type="PROSITE" id="PS51192">
    <property type="entry name" value="HELICASE_ATP_BIND_1"/>
    <property type="match status" value="1"/>
</dbReference>
<reference key="1">
    <citation type="journal article" date="1999" name="J. Virol.">
        <title>Infectious cDNA clone of hypovirus CHV1-Euro7: a comparative virology approach to investigate virus-mediated hypovirulence of the chestnut blight fungus Cryphonectria parasitica.</title>
        <authorList>
            <person name="Chen B."/>
            <person name="Nuss D.L."/>
        </authorList>
    </citation>
    <scope>NUCLEOTIDE SEQUENCE [GENOMIC RNA]</scope>
</reference>
<keyword id="KW-0067">ATP-binding</keyword>
<keyword id="KW-0347">Helicase</keyword>
<keyword id="KW-1043">Host membrane</keyword>
<keyword id="KW-0378">Hydrolase</keyword>
<keyword id="KW-0472">Membrane</keyword>
<keyword id="KW-0547">Nucleotide-binding</keyword>
<keyword id="KW-0548">Nucleotidyltransferase</keyword>
<keyword id="KW-0645">Protease</keyword>
<keyword id="KW-0696">RNA-directed RNA polymerase</keyword>
<keyword id="KW-0788">Thiol protease</keyword>
<keyword id="KW-0808">Transferase</keyword>
<keyword id="KW-0812">Transmembrane</keyword>
<keyword id="KW-1133">Transmembrane helix</keyword>
<organism>
    <name type="scientific">Cryphonectria hypovirus 1 (strain Euro7)</name>
    <name type="common">CHV-1/Euro7</name>
    <name type="synonym">Chestnut blight fungus hypovirulence-associated virus</name>
    <dbReference type="NCBI Taxonomy" id="321609"/>
    <lineage>
        <taxon>Viruses</taxon>
        <taxon>Riboviria</taxon>
        <taxon>Orthornavirae</taxon>
        <taxon>Pisuviricota</taxon>
        <taxon>Duplopiviricetes</taxon>
        <taxon>Durnavirales</taxon>
        <taxon>Hypoviridae</taxon>
        <taxon>Alphahypovirus</taxon>
        <taxon>Alphahypovirus cryphonectriae</taxon>
    </lineage>
</organism>
<sequence length="3164" mass="362598">MYKEAERPIEVWRTQVMDGPTWTALSEPCRNRLFFASGKGGEHLTLDVIQPDSYTKIRLFRSGRFEVSVDGKSFGQGGNRYRFVFRYDSLLSTPFGYPAEDKEMALQGYNHEQLLGEMFLKLPDSYVDGRPIAEAFFRYVDDLKWDVGVFRDRRSLTELHLPASSGLTTEQARVAKLEWPPLPIIQAQPTILAGIIDNFKICFPVNGKWVYGQGLSWTRYDGDASVPISLLTNRQHARFWNDKDVPTGLKLSKEGFIKLWAQKSRKWQDHMARAIGLSHAATAELVRATKVNEAKPHLVPMEEAKEAPRQQLVPRRSTFVDSHEKGVEVDPLRLPTEEGRCFELLFNNQVTPAIFDKKPLLRDVLAVFKENVCTMDSLEISHSDRCVHIVTGETFRNYKEIKAVLEVIIWNDPNILVGAEEGSIADYVKAGKHFLFENHQWVRNGLKLAKGLAEPGQLAKDNTNPSTPKPIETTDYIHPFDNGQPLPGRSDQWVSGFEVTRLRHHEEMPHIRNVRNTGIHGLPGDFLSNYPRLPTPVFHRLRDLWYDVIGILMKLEFGDNRSPVLNVTANADWVRSETTVNFISDQPGKARSRPRKDGGFDILVPCRGIATRSIRLLPLFIRLPPRFKAVALLNGRQSDYDNYGWPVFNPVIPLPQIDSFYVEAVAAGRSMYPPGFLLDRYDALGFLIHTATVYGAEEAFLLPFTHHARVYPPPRPGREIAFGSWCKNYKFTAERYWYDADWKLRVHETNHDFDRLIEITKTCRRNPPEENLQARLKDTAREVCSIWQYNIMIASSVAFLIPLFYTLYVPYLQFYLHVDPGDYMLLPPVLWLVWTNLCYGYACDAWCRLFFFVEEAGKKELVHSSEEFSSDPSSTLLIPTMGTRGDHVPPRFFANMAVLAGVKTHLLKLQTATYGDLENLKKGKLGSLLPGYLQNHYSVLRGYKAVFTPHVELDMPNATSYNLAPPRSYINKIRYLTDENRSGASIVDRAVTWFAEELADTFWPDWQIGCLRGCNLPRSADGVSLITKRPNLKTGKIGWLHGSADPAVVPKDIRDRYPLVPNGDHNEIFRHYDKIYMPGGAGAVQTAIACGCEVVVTDVNLDRDYHTMPTQKDFHQPSILPYFAWLWRQGFDVKLPRVLLVVGWLKFHYSIRYKHLEFAADFVIRAGLFWWYGCLHLLPFMAAAIMTPRFVKKYLVSMAWLTEPGLLMLKALWRFPIFMVTPRWMLPFIVTVSAYNWWWPLSQDGLNYASKRFELIFEPVARGKYTFSYPFGHWCLRDTNSMIIYEGKFVDSSETSIGSPFKLSKSVRPVRPGAVFHLVPFHIQKLLDSMDEEPLPYSANHNCTTVILKGIMYRSALGFVFAYAVSWAVYLVLRPPQAAATVYHWMYPERSWDTSRLYHLLGFAAGGTVPMEVIDEEPIEEKPSDAGRSEPIPDNDKQEESDYDQEWWGSQDSIDTVSNDLCYLLSFLKDTAIPEEVKLDVIELAYTQFVRNEKGRIPEPKETRILVMPNWKPDNWARLIDETHRVLSQFTHYTPRVLNELVVWLKGLGENLYRVAEPILMLLVRAMRAAKSVSDRATRSIYHCLCHWLDVMYGGSAPTRVKTVWGLTGLIASGMTSQKAILAQNIAMMEYQGRGNFLDDYDNFVSNIKEPGKGLPGINTIGGPQRRPIRYKNPVMSHQAAEICGLKPGEYEVDEKYQERINDYLAEGIPQAVDGVLFGDRNPDRIARSINRYEPEYSGCSPEDKALVEDTARAMFEQWPEVFADRDIMLPKGVELYIKEKYSAGTPFISSFYKSRKALKQAGVMDVIRKNALECIKTGKYPTQFYHAFAKSQAVPGQPLLAPRMKDLRTVVSEDLSAYMVDQIFQIEANKRITWETYGAGSGMPLSQSMARIWDELHDLRKREGGQFIIADATAYDSNCKPVLFHGAGKLVELGFQNHPSGKGRQFAQVVQCKFEAMQNAWVMGITEPSYSALTFHVPDAEVRRDLESKFPRHFVTFSELLEHNNMNVTEWKRLTWEEQKACARDMQSVPGKVFLTNDPALRLQGSSWQGSFTTEPKRDEFRKYQTYFCNSKEAMKEDIKRIVFANREVISNVHHKNRGGGTGQSATSWDNTATFKLGVISAWARATGKLPKDFFCSNRLYNTSDDTVWWSKDLLSSAEVDRFKQAAADFGILLEIGSTKKITEVEYLSKLPRRPTAEDSADYRTWRQGRIENMRSSGRFTEEQMLSIEREQLPQFLMVQNPTAILMRRTAFRYYQSSPSKFLYTSCERGAGHALVTAFQPALYKRFAIEYAEDLNRLCKEHHINQRYELVSQQDRIKMQVINVNPNWKQGFRLSPRQEAFLRWIRQAKFPSYRQVLDIHLRTKDPDPSAHDRFIAKLDRAWRNPDEGIRDMVDGVYRYTDLIPEEFKRFMPSTDMLYAENPWHTHNQYVEKFIYLKLLETTTVDELTFAQFDAVAKESPYGICMNTIKFWEDLRDPDYLKDLLASEAMIDKVRIYQGMTVIISAMYFAMHWVELFVQSLFLIGPLYNLFMWSFWGLSKVYGLANTFYWHGKARSSREISSIMPRDPYMWSKRFVSTMADFIPERFALGLVPATLILDGLAEIIEVLFGRMWRMFANLKSVGTDFGDARSGKSLNVPSNPWAAYAHTYATKAIEHGHVTVAAKTASGKSTFFPAAVWAERRNIGVKKLWIVMPRKILRDNWEIPFDIRSQIVKRGKTLDPTADIYITTYGHFRTRIGGLVPRDNLVFFDEFHEMDGFMLQDVEEWKGPTIFMSATPVALHGMADIPFLEPTLPKRFNLTVYKVDSDDVLEMWNRARNQFADQPALLARPMIIVPTYNELKKTIAGLENLDRSVTWHEVSSNSPFVPKTGGLVCTPYVQTGIDIKPAPSILIDSGRDVVVHKGRLITPHPYTDEKTNEQRVNRVGRTMDGVVIQPQLAGTGDPPVKYPSGIFFSSRLVAGQYRVPRLTEVDGCVHPELPYISIKYTSELSNPVEAKKEEQNVRKSLLFIHLMALAGVRQSEWALRYNRYFELHLPFGEDEDHLQRILEQGKLRYAHHIPVDMAMQLLGNGHVTWGIGGVPTITRPRYPCDGMWVEDPSSRKSYVHKVLLHQREHAEIGMWQAQVNELKAQKLALQSQLRSVCTRRSTASRILRHIRPPDIPVCG</sequence>
<evidence type="ECO:0000250" key="1"/>
<evidence type="ECO:0000255" key="2"/>
<evidence type="ECO:0000255" key="3">
    <source>
        <dbReference type="PROSITE-ProRule" id="PRU00541"/>
    </source>
</evidence>
<evidence type="ECO:0000255" key="4">
    <source>
        <dbReference type="PROSITE-ProRule" id="PRU01223"/>
    </source>
</evidence>
<evidence type="ECO:0000256" key="5">
    <source>
        <dbReference type="SAM" id="MobiDB-lite"/>
    </source>
</evidence>
<evidence type="ECO:0000305" key="6"/>
<name>POLB_CHPVU</name>
<proteinExistence type="inferred from homology"/>
<accession>Q9YTU2</accession>
<protein>
    <recommendedName>
        <fullName>ORFB polyprotein</fullName>
    </recommendedName>
    <component>
        <recommendedName>
            <fullName evidence="4">Papain-like protease p48</fullName>
            <ecNumber evidence="4">3.4.22.-</ecNumber>
        </recommendedName>
    </component>
    <component>
        <recommendedName>
            <fullName>Putative RNA-directed RNA polymerase/helicase</fullName>
            <ecNumber>2.7.7.48</ecNumber>
            <ecNumber>3.6.4.13</ecNumber>
        </recommendedName>
    </component>
</protein>